<proteinExistence type="inferred from homology"/>
<accession>Q8PBJ6</accession>
<sequence>MGLLDFLKSKKNTAETAKNRLQIIIAQERNHRGGPDYLPLMQRELLEVIKKYVNIDADAVRVDLVKDGEHDVLDITVALPEDGDK</sequence>
<feature type="chain" id="PRO_0000298217" description="Cell division topological specificity factor">
    <location>
        <begin position="1"/>
        <end position="85"/>
    </location>
</feature>
<organism>
    <name type="scientific">Xanthomonas campestris pv. campestris (strain ATCC 33913 / DSM 3586 / NCPPB 528 / LMG 568 / P 25)</name>
    <dbReference type="NCBI Taxonomy" id="190485"/>
    <lineage>
        <taxon>Bacteria</taxon>
        <taxon>Pseudomonadati</taxon>
        <taxon>Pseudomonadota</taxon>
        <taxon>Gammaproteobacteria</taxon>
        <taxon>Lysobacterales</taxon>
        <taxon>Lysobacteraceae</taxon>
        <taxon>Xanthomonas</taxon>
    </lineage>
</organism>
<protein>
    <recommendedName>
        <fullName evidence="1">Cell division topological specificity factor</fullName>
    </recommendedName>
</protein>
<keyword id="KW-0131">Cell cycle</keyword>
<keyword id="KW-0132">Cell division</keyword>
<keyword id="KW-1185">Reference proteome</keyword>
<gene>
    <name evidence="1" type="primary">minE</name>
    <name type="ordered locus">XCC1123</name>
</gene>
<evidence type="ECO:0000255" key="1">
    <source>
        <dbReference type="HAMAP-Rule" id="MF_00262"/>
    </source>
</evidence>
<dbReference type="EMBL" id="AE008922">
    <property type="protein sequence ID" value="AAM40422.1"/>
    <property type="molecule type" value="Genomic_DNA"/>
</dbReference>
<dbReference type="RefSeq" id="NP_636498.1">
    <property type="nucleotide sequence ID" value="NC_003902.1"/>
</dbReference>
<dbReference type="RefSeq" id="WP_011036323.1">
    <property type="nucleotide sequence ID" value="NC_003902.1"/>
</dbReference>
<dbReference type="SMR" id="Q8PBJ6"/>
<dbReference type="STRING" id="190485.XCC1123"/>
<dbReference type="EnsemblBacteria" id="AAM40422">
    <property type="protein sequence ID" value="AAM40422"/>
    <property type="gene ID" value="XCC1123"/>
</dbReference>
<dbReference type="GeneID" id="93986476"/>
<dbReference type="KEGG" id="xcc:XCC1123"/>
<dbReference type="PATRIC" id="fig|190485.4.peg.1200"/>
<dbReference type="eggNOG" id="COG0851">
    <property type="taxonomic scope" value="Bacteria"/>
</dbReference>
<dbReference type="HOGENOM" id="CLU_137929_2_1_6"/>
<dbReference type="OrthoDB" id="9802655at2"/>
<dbReference type="Proteomes" id="UP000001010">
    <property type="component" value="Chromosome"/>
</dbReference>
<dbReference type="GO" id="GO:0005886">
    <property type="term" value="C:plasma membrane"/>
    <property type="evidence" value="ECO:0000318"/>
    <property type="project" value="GO_Central"/>
</dbReference>
<dbReference type="GO" id="GO:0000918">
    <property type="term" value="P:division septum site selection"/>
    <property type="evidence" value="ECO:0000318"/>
    <property type="project" value="GO_Central"/>
</dbReference>
<dbReference type="GO" id="GO:0032955">
    <property type="term" value="P:regulation of division septum assembly"/>
    <property type="evidence" value="ECO:0007669"/>
    <property type="project" value="InterPro"/>
</dbReference>
<dbReference type="FunFam" id="3.30.1070.10:FF:000001">
    <property type="entry name" value="Cell division topological specificity factor"/>
    <property type="match status" value="1"/>
</dbReference>
<dbReference type="Gene3D" id="3.30.1070.10">
    <property type="entry name" value="Cell division topological specificity factor MinE"/>
    <property type="match status" value="1"/>
</dbReference>
<dbReference type="HAMAP" id="MF_00262">
    <property type="entry name" value="MinE"/>
    <property type="match status" value="1"/>
</dbReference>
<dbReference type="InterPro" id="IPR005527">
    <property type="entry name" value="MinE"/>
</dbReference>
<dbReference type="InterPro" id="IPR036707">
    <property type="entry name" value="MinE_sf"/>
</dbReference>
<dbReference type="NCBIfam" id="TIGR01215">
    <property type="entry name" value="minE"/>
    <property type="match status" value="1"/>
</dbReference>
<dbReference type="NCBIfam" id="NF001422">
    <property type="entry name" value="PRK00296.1"/>
    <property type="match status" value="1"/>
</dbReference>
<dbReference type="Pfam" id="PF03776">
    <property type="entry name" value="MinE"/>
    <property type="match status" value="1"/>
</dbReference>
<dbReference type="SUPFAM" id="SSF55229">
    <property type="entry name" value="Cell division protein MinE topological specificity domain"/>
    <property type="match status" value="1"/>
</dbReference>
<reference key="1">
    <citation type="journal article" date="2002" name="Nature">
        <title>Comparison of the genomes of two Xanthomonas pathogens with differing host specificities.</title>
        <authorList>
            <person name="da Silva A.C.R."/>
            <person name="Ferro J.A."/>
            <person name="Reinach F.C."/>
            <person name="Farah C.S."/>
            <person name="Furlan L.R."/>
            <person name="Quaggio R.B."/>
            <person name="Monteiro-Vitorello C.B."/>
            <person name="Van Sluys M.A."/>
            <person name="Almeida N.F. Jr."/>
            <person name="Alves L.M.C."/>
            <person name="do Amaral A.M."/>
            <person name="Bertolini M.C."/>
            <person name="Camargo L.E.A."/>
            <person name="Camarotte G."/>
            <person name="Cannavan F."/>
            <person name="Cardozo J."/>
            <person name="Chambergo F."/>
            <person name="Ciapina L.P."/>
            <person name="Cicarelli R.M.B."/>
            <person name="Coutinho L.L."/>
            <person name="Cursino-Santos J.R."/>
            <person name="El-Dorry H."/>
            <person name="Faria J.B."/>
            <person name="Ferreira A.J.S."/>
            <person name="Ferreira R.C.C."/>
            <person name="Ferro M.I.T."/>
            <person name="Formighieri E.F."/>
            <person name="Franco M.C."/>
            <person name="Greggio C.C."/>
            <person name="Gruber A."/>
            <person name="Katsuyama A.M."/>
            <person name="Kishi L.T."/>
            <person name="Leite R.P."/>
            <person name="Lemos E.G.M."/>
            <person name="Lemos M.V.F."/>
            <person name="Locali E.C."/>
            <person name="Machado M.A."/>
            <person name="Madeira A.M.B.N."/>
            <person name="Martinez-Rossi N.M."/>
            <person name="Martins E.C."/>
            <person name="Meidanis J."/>
            <person name="Menck C.F.M."/>
            <person name="Miyaki C.Y."/>
            <person name="Moon D.H."/>
            <person name="Moreira L.M."/>
            <person name="Novo M.T.M."/>
            <person name="Okura V.K."/>
            <person name="Oliveira M.C."/>
            <person name="Oliveira V.R."/>
            <person name="Pereira H.A."/>
            <person name="Rossi A."/>
            <person name="Sena J.A.D."/>
            <person name="Silva C."/>
            <person name="de Souza R.F."/>
            <person name="Spinola L.A.F."/>
            <person name="Takita M.A."/>
            <person name="Tamura R.E."/>
            <person name="Teixeira E.C."/>
            <person name="Tezza R.I.D."/>
            <person name="Trindade dos Santos M."/>
            <person name="Truffi D."/>
            <person name="Tsai S.M."/>
            <person name="White F.F."/>
            <person name="Setubal J.C."/>
            <person name="Kitajima J.P."/>
        </authorList>
    </citation>
    <scope>NUCLEOTIDE SEQUENCE [LARGE SCALE GENOMIC DNA]</scope>
    <source>
        <strain>ATCC 33913 / DSM 3586 / NCPPB 528 / LMG 568 / P 25</strain>
    </source>
</reference>
<name>MINE_XANCP</name>
<comment type="function">
    <text evidence="1">Prevents the cell division inhibition by proteins MinC and MinD at internal division sites while permitting inhibition at polar sites. This ensures cell division at the proper site by restricting the formation of a division septum at the midpoint of the long axis of the cell.</text>
</comment>
<comment type="similarity">
    <text evidence="1">Belongs to the MinE family.</text>
</comment>